<comment type="subunit">
    <text evidence="1">Part of the 50S ribosomal subunit. Contacts protein L32.</text>
</comment>
<comment type="similarity">
    <text evidence="1">Belongs to the bacterial ribosomal protein bL17 family.</text>
</comment>
<feature type="chain" id="PRO_1000073432" description="Large ribosomal subunit protein bL17">
    <location>
        <begin position="1"/>
        <end position="112"/>
    </location>
</feature>
<evidence type="ECO:0000255" key="1">
    <source>
        <dbReference type="HAMAP-Rule" id="MF_01368"/>
    </source>
</evidence>
<evidence type="ECO:0000305" key="2"/>
<protein>
    <recommendedName>
        <fullName evidence="1">Large ribosomal subunit protein bL17</fullName>
    </recommendedName>
    <alternativeName>
        <fullName evidence="2">50S ribosomal protein L17</fullName>
    </alternativeName>
</protein>
<keyword id="KW-1185">Reference proteome</keyword>
<keyword id="KW-0687">Ribonucleoprotein</keyword>
<keyword id="KW-0689">Ribosomal protein</keyword>
<dbReference type="EMBL" id="CP000612">
    <property type="protein sequence ID" value="ABO48793.1"/>
    <property type="molecule type" value="Genomic_DNA"/>
</dbReference>
<dbReference type="RefSeq" id="WP_011876631.1">
    <property type="nucleotide sequence ID" value="NC_009253.1"/>
</dbReference>
<dbReference type="SMR" id="A4J140"/>
<dbReference type="STRING" id="349161.Dred_0244"/>
<dbReference type="KEGG" id="drm:Dred_0244"/>
<dbReference type="eggNOG" id="COG0203">
    <property type="taxonomic scope" value="Bacteria"/>
</dbReference>
<dbReference type="HOGENOM" id="CLU_074407_2_2_9"/>
<dbReference type="OrthoDB" id="9809073at2"/>
<dbReference type="Proteomes" id="UP000001556">
    <property type="component" value="Chromosome"/>
</dbReference>
<dbReference type="GO" id="GO:0022625">
    <property type="term" value="C:cytosolic large ribosomal subunit"/>
    <property type="evidence" value="ECO:0007669"/>
    <property type="project" value="TreeGrafter"/>
</dbReference>
<dbReference type="GO" id="GO:0003735">
    <property type="term" value="F:structural constituent of ribosome"/>
    <property type="evidence" value="ECO:0007669"/>
    <property type="project" value="InterPro"/>
</dbReference>
<dbReference type="GO" id="GO:0006412">
    <property type="term" value="P:translation"/>
    <property type="evidence" value="ECO:0007669"/>
    <property type="project" value="UniProtKB-UniRule"/>
</dbReference>
<dbReference type="FunFam" id="3.90.1030.10:FF:000001">
    <property type="entry name" value="50S ribosomal protein L17"/>
    <property type="match status" value="1"/>
</dbReference>
<dbReference type="Gene3D" id="3.90.1030.10">
    <property type="entry name" value="Ribosomal protein L17"/>
    <property type="match status" value="1"/>
</dbReference>
<dbReference type="HAMAP" id="MF_01368">
    <property type="entry name" value="Ribosomal_bL17"/>
    <property type="match status" value="1"/>
</dbReference>
<dbReference type="InterPro" id="IPR000456">
    <property type="entry name" value="Ribosomal_bL17"/>
</dbReference>
<dbReference type="InterPro" id="IPR047859">
    <property type="entry name" value="Ribosomal_bL17_CS"/>
</dbReference>
<dbReference type="InterPro" id="IPR036373">
    <property type="entry name" value="Ribosomal_bL17_sf"/>
</dbReference>
<dbReference type="NCBIfam" id="TIGR00059">
    <property type="entry name" value="L17"/>
    <property type="match status" value="1"/>
</dbReference>
<dbReference type="PANTHER" id="PTHR14413:SF16">
    <property type="entry name" value="LARGE RIBOSOMAL SUBUNIT PROTEIN BL17M"/>
    <property type="match status" value="1"/>
</dbReference>
<dbReference type="PANTHER" id="PTHR14413">
    <property type="entry name" value="RIBOSOMAL PROTEIN L17"/>
    <property type="match status" value="1"/>
</dbReference>
<dbReference type="Pfam" id="PF01196">
    <property type="entry name" value="Ribosomal_L17"/>
    <property type="match status" value="1"/>
</dbReference>
<dbReference type="SUPFAM" id="SSF64263">
    <property type="entry name" value="Prokaryotic ribosomal protein L17"/>
    <property type="match status" value="1"/>
</dbReference>
<dbReference type="PROSITE" id="PS01167">
    <property type="entry name" value="RIBOSOMAL_L17"/>
    <property type="match status" value="1"/>
</dbReference>
<proteinExistence type="inferred from homology"/>
<accession>A4J140</accession>
<gene>
    <name evidence="1" type="primary">rplQ</name>
    <name type="ordered locus">Dred_0244</name>
</gene>
<name>RL17_DESRM</name>
<sequence length="112" mass="12881">MGYRRFGLTTGHRKAMLRNLVTSLFRDERIETTGPRAKDVRSIAEKLVTVAKKGDLAARRQCLEYIYEEDVVRKLFDTIAPQYAERQGGYTRIIKVGYRRGDAAEMVLLELV</sequence>
<reference key="1">
    <citation type="submission" date="2007-03" db="EMBL/GenBank/DDBJ databases">
        <title>Complete sequence of Desulfotomaculum reducens MI-1.</title>
        <authorList>
            <consortium name="US DOE Joint Genome Institute"/>
            <person name="Copeland A."/>
            <person name="Lucas S."/>
            <person name="Lapidus A."/>
            <person name="Barry K."/>
            <person name="Detter J.C."/>
            <person name="Glavina del Rio T."/>
            <person name="Hammon N."/>
            <person name="Israni S."/>
            <person name="Dalin E."/>
            <person name="Tice H."/>
            <person name="Pitluck S."/>
            <person name="Sims D."/>
            <person name="Brettin T."/>
            <person name="Bruce D."/>
            <person name="Han C."/>
            <person name="Tapia R."/>
            <person name="Schmutz J."/>
            <person name="Larimer F."/>
            <person name="Land M."/>
            <person name="Hauser L."/>
            <person name="Kyrpides N."/>
            <person name="Kim E."/>
            <person name="Tebo B.M."/>
            <person name="Richardson P."/>
        </authorList>
    </citation>
    <scope>NUCLEOTIDE SEQUENCE [LARGE SCALE GENOMIC DNA]</scope>
    <source>
        <strain>ATCC BAA-1160 / DSM 100696 / MI-1</strain>
    </source>
</reference>
<organism>
    <name type="scientific">Desulforamulus reducens (strain ATCC BAA-1160 / DSM 100696 / MI-1)</name>
    <name type="common">Desulfotomaculum reducens</name>
    <dbReference type="NCBI Taxonomy" id="349161"/>
    <lineage>
        <taxon>Bacteria</taxon>
        <taxon>Bacillati</taxon>
        <taxon>Bacillota</taxon>
        <taxon>Clostridia</taxon>
        <taxon>Eubacteriales</taxon>
        <taxon>Peptococcaceae</taxon>
        <taxon>Desulforamulus</taxon>
    </lineage>
</organism>